<sequence>MSETKNVRTLQGKVVSDKMDKTVTVLVERKVKHPLYGKIIRLSTKIHAHDENNQYGIGDVVVISESRPLSKTKSWVVSELVEKARSI</sequence>
<reference key="1">
    <citation type="journal article" date="2000" name="Nature">
        <title>Complete DNA sequence of a serogroup A strain of Neisseria meningitidis Z2491.</title>
        <authorList>
            <person name="Parkhill J."/>
            <person name="Achtman M."/>
            <person name="James K.D."/>
            <person name="Bentley S.D."/>
            <person name="Churcher C.M."/>
            <person name="Klee S.R."/>
            <person name="Morelli G."/>
            <person name="Basham D."/>
            <person name="Brown D."/>
            <person name="Chillingworth T."/>
            <person name="Davies R.M."/>
            <person name="Davis P."/>
            <person name="Devlin K."/>
            <person name="Feltwell T."/>
            <person name="Hamlin N."/>
            <person name="Holroyd S."/>
            <person name="Jagels K."/>
            <person name="Leather S."/>
            <person name="Moule S."/>
            <person name="Mungall K.L."/>
            <person name="Quail M.A."/>
            <person name="Rajandream M.A."/>
            <person name="Rutherford K.M."/>
            <person name="Simmonds M."/>
            <person name="Skelton J."/>
            <person name="Whitehead S."/>
            <person name="Spratt B.G."/>
            <person name="Barrell B.G."/>
        </authorList>
    </citation>
    <scope>NUCLEOTIDE SEQUENCE [LARGE SCALE GENOMIC DNA]</scope>
    <source>
        <strain>DSM 15465 / Z2491</strain>
    </source>
</reference>
<protein>
    <recommendedName>
        <fullName evidence="1">Small ribosomal subunit protein uS17</fullName>
    </recommendedName>
    <alternativeName>
        <fullName evidence="2">30S ribosomal protein S17</fullName>
    </alternativeName>
</protein>
<evidence type="ECO:0000255" key="1">
    <source>
        <dbReference type="HAMAP-Rule" id="MF_01345"/>
    </source>
</evidence>
<evidence type="ECO:0000305" key="2"/>
<accession>Q9JQL7</accession>
<accession>A1INY1</accession>
<gene>
    <name evidence="1" type="primary">rpsQ</name>
    <name type="ordered locus">NMA0120</name>
</gene>
<name>RS17_NEIMA</name>
<proteinExistence type="inferred from homology"/>
<comment type="function">
    <text evidence="1">One of the primary rRNA binding proteins, it binds specifically to the 5'-end of 16S ribosomal RNA.</text>
</comment>
<comment type="subunit">
    <text evidence="1">Part of the 30S ribosomal subunit.</text>
</comment>
<comment type="similarity">
    <text evidence="1">Belongs to the universal ribosomal protein uS17 family.</text>
</comment>
<keyword id="KW-0687">Ribonucleoprotein</keyword>
<keyword id="KW-0689">Ribosomal protein</keyword>
<keyword id="KW-0694">RNA-binding</keyword>
<keyword id="KW-0699">rRNA-binding</keyword>
<dbReference type="EMBL" id="AL157959">
    <property type="protein sequence ID" value="CAM07438.1"/>
    <property type="molecule type" value="Genomic_DNA"/>
</dbReference>
<dbReference type="PIR" id="A81232">
    <property type="entry name" value="A81232"/>
</dbReference>
<dbReference type="RefSeq" id="WP_002215433.1">
    <property type="nucleotide sequence ID" value="NC_003116.1"/>
</dbReference>
<dbReference type="SMR" id="Q9JQL7"/>
<dbReference type="EnsemblBacteria" id="CAM07438">
    <property type="protein sequence ID" value="CAM07438"/>
    <property type="gene ID" value="NMA0120"/>
</dbReference>
<dbReference type="GeneID" id="93387226"/>
<dbReference type="KEGG" id="nma:NMA0120"/>
<dbReference type="HOGENOM" id="CLU_073626_1_1_4"/>
<dbReference type="Proteomes" id="UP000000626">
    <property type="component" value="Chromosome"/>
</dbReference>
<dbReference type="GO" id="GO:0022627">
    <property type="term" value="C:cytosolic small ribosomal subunit"/>
    <property type="evidence" value="ECO:0007669"/>
    <property type="project" value="TreeGrafter"/>
</dbReference>
<dbReference type="GO" id="GO:0019843">
    <property type="term" value="F:rRNA binding"/>
    <property type="evidence" value="ECO:0007669"/>
    <property type="project" value="UniProtKB-UniRule"/>
</dbReference>
<dbReference type="GO" id="GO:0003735">
    <property type="term" value="F:structural constituent of ribosome"/>
    <property type="evidence" value="ECO:0007669"/>
    <property type="project" value="InterPro"/>
</dbReference>
<dbReference type="GO" id="GO:0006412">
    <property type="term" value="P:translation"/>
    <property type="evidence" value="ECO:0007669"/>
    <property type="project" value="UniProtKB-UniRule"/>
</dbReference>
<dbReference type="CDD" id="cd00364">
    <property type="entry name" value="Ribosomal_uS17"/>
    <property type="match status" value="1"/>
</dbReference>
<dbReference type="FunFam" id="2.40.50.140:FF:000014">
    <property type="entry name" value="30S ribosomal protein S17"/>
    <property type="match status" value="1"/>
</dbReference>
<dbReference type="Gene3D" id="2.40.50.140">
    <property type="entry name" value="Nucleic acid-binding proteins"/>
    <property type="match status" value="1"/>
</dbReference>
<dbReference type="HAMAP" id="MF_01345_B">
    <property type="entry name" value="Ribosomal_uS17_B"/>
    <property type="match status" value="1"/>
</dbReference>
<dbReference type="InterPro" id="IPR012340">
    <property type="entry name" value="NA-bd_OB-fold"/>
</dbReference>
<dbReference type="InterPro" id="IPR000266">
    <property type="entry name" value="Ribosomal_uS17"/>
</dbReference>
<dbReference type="InterPro" id="IPR019984">
    <property type="entry name" value="Ribosomal_uS17_bact/chlr"/>
</dbReference>
<dbReference type="InterPro" id="IPR019979">
    <property type="entry name" value="Ribosomal_uS17_CS"/>
</dbReference>
<dbReference type="NCBIfam" id="NF004123">
    <property type="entry name" value="PRK05610.1"/>
    <property type="match status" value="1"/>
</dbReference>
<dbReference type="NCBIfam" id="TIGR03635">
    <property type="entry name" value="uS17_bact"/>
    <property type="match status" value="1"/>
</dbReference>
<dbReference type="PANTHER" id="PTHR10744">
    <property type="entry name" value="40S RIBOSOMAL PROTEIN S11 FAMILY MEMBER"/>
    <property type="match status" value="1"/>
</dbReference>
<dbReference type="PANTHER" id="PTHR10744:SF1">
    <property type="entry name" value="SMALL RIBOSOMAL SUBUNIT PROTEIN US17M"/>
    <property type="match status" value="1"/>
</dbReference>
<dbReference type="Pfam" id="PF00366">
    <property type="entry name" value="Ribosomal_S17"/>
    <property type="match status" value="1"/>
</dbReference>
<dbReference type="PRINTS" id="PR00973">
    <property type="entry name" value="RIBOSOMALS17"/>
</dbReference>
<dbReference type="SUPFAM" id="SSF50249">
    <property type="entry name" value="Nucleic acid-binding proteins"/>
    <property type="match status" value="1"/>
</dbReference>
<dbReference type="PROSITE" id="PS00056">
    <property type="entry name" value="RIBOSOMAL_S17"/>
    <property type="match status" value="1"/>
</dbReference>
<feature type="chain" id="PRO_0000233517" description="Small ribosomal subunit protein uS17">
    <location>
        <begin position="1"/>
        <end position="87"/>
    </location>
</feature>
<organism>
    <name type="scientific">Neisseria meningitidis serogroup A / serotype 4A (strain DSM 15465 / Z2491)</name>
    <dbReference type="NCBI Taxonomy" id="122587"/>
    <lineage>
        <taxon>Bacteria</taxon>
        <taxon>Pseudomonadati</taxon>
        <taxon>Pseudomonadota</taxon>
        <taxon>Betaproteobacteria</taxon>
        <taxon>Neisseriales</taxon>
        <taxon>Neisseriaceae</taxon>
        <taxon>Neisseria</taxon>
    </lineage>
</organism>